<gene>
    <name evidence="3" type="primary">alr</name>
</gene>
<accession>B9WZ64</accession>
<reference key="1">
    <citation type="journal article" date="2009" name="Appl. Microbiol. Biotechnol.">
        <title>A periplasmic, pyridoxal-5'-phosphate-dependent amino acid racemase in Pseudomonas taetrolens.</title>
        <authorList>
            <person name="Matsui D."/>
            <person name="Oikawa T."/>
            <person name="Arakawa N."/>
            <person name="Osumi S."/>
            <person name="Lausberg F."/>
            <person name="Stabler N."/>
            <person name="Freudl R."/>
            <person name="Eggeling L."/>
        </authorList>
    </citation>
    <scope>NUCLEOTIDE SEQUENCE [GENOMIC DNA]</scope>
    <scope>FUNCTION</scope>
    <scope>CATALYTIC ACTIVITY</scope>
    <scope>SUBSTRATE SPECIFICITY</scope>
    <scope>BIOPHYSICOCHEMICAL PROPERTIES</scope>
    <scope>SUBUNIT</scope>
    <source>
        <strain>ATCC 4683 / DSM 21104 / JCM 20238 / CCUG 560 / NBRC 3460 / NCIMB 9396 / NCTC 10697 / NRRL B-14</strain>
    </source>
</reference>
<proteinExistence type="evidence at protein level"/>
<organism>
    <name type="scientific">Pseudomonas taetrolens</name>
    <dbReference type="NCBI Taxonomy" id="47884"/>
    <lineage>
        <taxon>Bacteria</taxon>
        <taxon>Pseudomonadati</taxon>
        <taxon>Pseudomonadota</taxon>
        <taxon>Gammaproteobacteria</taxon>
        <taxon>Pseudomonadales</taxon>
        <taxon>Pseudomonadaceae</taxon>
        <taxon>Pseudomonas</taxon>
    </lineage>
</organism>
<sequence length="357" mass="38814">MRPARALIDLQALRHNYRLARELTGAKALAVIKADAYGHGAVRCALALEAEADGFAVACIEEALELRAAGIKAPVLLLEGFFEASELALIAEHDLWCVVHSLWQLEAIERTQLHKPLTVWLKLDSGMHRVGLHPKDYHEAYQRLLASGKVARIVLMSHFARADELDADATAQQIAVFEAARQGLAAECSLRNSPGVLGWPQAPSDWVRPGLMLYGATPFEVAQAEAERLQPVMTLQSRVISVRELPAGEPVGYGAKFVSPRPTRVGVVAMGYADGYPRQAPNGTPVLVAGKRTQLIGRVSMDMLSIDLTDVPEATVGSPVELWGKHVLASEVAAHAGTIPYQIFCNLKRVPRDYIGE</sequence>
<dbReference type="EC" id="5.1.1.1" evidence="1"/>
<dbReference type="EMBL" id="AB296103">
    <property type="protein sequence ID" value="BAH23434.1"/>
    <property type="molecule type" value="Genomic_DNA"/>
</dbReference>
<dbReference type="SMR" id="B9WZ64"/>
<dbReference type="STRING" id="47884.SAMN04490203_0162"/>
<dbReference type="UniPathway" id="UPA00042">
    <property type="reaction ID" value="UER00497"/>
</dbReference>
<dbReference type="GO" id="GO:0005829">
    <property type="term" value="C:cytosol"/>
    <property type="evidence" value="ECO:0007669"/>
    <property type="project" value="TreeGrafter"/>
</dbReference>
<dbReference type="GO" id="GO:0008784">
    <property type="term" value="F:alanine racemase activity"/>
    <property type="evidence" value="ECO:0007669"/>
    <property type="project" value="UniProtKB-UniRule"/>
</dbReference>
<dbReference type="GO" id="GO:0030170">
    <property type="term" value="F:pyridoxal phosphate binding"/>
    <property type="evidence" value="ECO:0007669"/>
    <property type="project" value="UniProtKB-UniRule"/>
</dbReference>
<dbReference type="GO" id="GO:0030632">
    <property type="term" value="P:D-alanine biosynthetic process"/>
    <property type="evidence" value="ECO:0007669"/>
    <property type="project" value="UniProtKB-UniRule"/>
</dbReference>
<dbReference type="CDD" id="cd06827">
    <property type="entry name" value="PLPDE_III_AR_proteobact"/>
    <property type="match status" value="1"/>
</dbReference>
<dbReference type="FunFam" id="2.40.37.10:FF:000002">
    <property type="entry name" value="Alanine racemase"/>
    <property type="match status" value="1"/>
</dbReference>
<dbReference type="FunFam" id="3.20.20.10:FF:000002">
    <property type="entry name" value="Alanine racemase"/>
    <property type="match status" value="1"/>
</dbReference>
<dbReference type="Gene3D" id="3.20.20.10">
    <property type="entry name" value="Alanine racemase"/>
    <property type="match status" value="1"/>
</dbReference>
<dbReference type="Gene3D" id="2.40.37.10">
    <property type="entry name" value="Lyase, Ornithine Decarboxylase, Chain A, domain 1"/>
    <property type="match status" value="1"/>
</dbReference>
<dbReference type="HAMAP" id="MF_01201">
    <property type="entry name" value="Ala_racemase"/>
    <property type="match status" value="1"/>
</dbReference>
<dbReference type="InterPro" id="IPR000821">
    <property type="entry name" value="Ala_racemase"/>
</dbReference>
<dbReference type="InterPro" id="IPR009006">
    <property type="entry name" value="Ala_racemase/Decarboxylase_C"/>
</dbReference>
<dbReference type="InterPro" id="IPR011079">
    <property type="entry name" value="Ala_racemase_C"/>
</dbReference>
<dbReference type="InterPro" id="IPR001608">
    <property type="entry name" value="Ala_racemase_N"/>
</dbReference>
<dbReference type="InterPro" id="IPR020622">
    <property type="entry name" value="Ala_racemase_pyridoxalP-BS"/>
</dbReference>
<dbReference type="InterPro" id="IPR029066">
    <property type="entry name" value="PLP-binding_barrel"/>
</dbReference>
<dbReference type="NCBIfam" id="TIGR00492">
    <property type="entry name" value="alr"/>
    <property type="match status" value="1"/>
</dbReference>
<dbReference type="PANTHER" id="PTHR30511">
    <property type="entry name" value="ALANINE RACEMASE"/>
    <property type="match status" value="1"/>
</dbReference>
<dbReference type="PANTHER" id="PTHR30511:SF0">
    <property type="entry name" value="ALANINE RACEMASE, CATABOLIC-RELATED"/>
    <property type="match status" value="1"/>
</dbReference>
<dbReference type="Pfam" id="PF00842">
    <property type="entry name" value="Ala_racemase_C"/>
    <property type="match status" value="1"/>
</dbReference>
<dbReference type="Pfam" id="PF01168">
    <property type="entry name" value="Ala_racemase_N"/>
    <property type="match status" value="1"/>
</dbReference>
<dbReference type="PRINTS" id="PR00992">
    <property type="entry name" value="ALARACEMASE"/>
</dbReference>
<dbReference type="SMART" id="SM01005">
    <property type="entry name" value="Ala_racemase_C"/>
    <property type="match status" value="1"/>
</dbReference>
<dbReference type="SUPFAM" id="SSF50621">
    <property type="entry name" value="Alanine racemase C-terminal domain-like"/>
    <property type="match status" value="1"/>
</dbReference>
<dbReference type="SUPFAM" id="SSF51419">
    <property type="entry name" value="PLP-binding barrel"/>
    <property type="match status" value="1"/>
</dbReference>
<dbReference type="PROSITE" id="PS00395">
    <property type="entry name" value="ALANINE_RACEMASE"/>
    <property type="match status" value="1"/>
</dbReference>
<evidence type="ECO:0000255" key="1">
    <source>
        <dbReference type="HAMAP-Rule" id="MF_01201"/>
    </source>
</evidence>
<evidence type="ECO:0000269" key="2">
    <source>
    </source>
</evidence>
<evidence type="ECO:0000303" key="3">
    <source>
    </source>
</evidence>
<name>ALR_PSETA</name>
<feature type="chain" id="PRO_0000419112" description="Alanine racemase">
    <location>
        <begin position="1"/>
        <end position="357"/>
    </location>
</feature>
<feature type="active site" description="Proton acceptor; specific for D-alanine" evidence="1">
    <location>
        <position position="33"/>
    </location>
</feature>
<feature type="active site" description="Proton acceptor; specific for L-alanine" evidence="1">
    <location>
        <position position="253"/>
    </location>
</feature>
<feature type="binding site" evidence="1">
    <location>
        <position position="129"/>
    </location>
    <ligand>
        <name>substrate</name>
    </ligand>
</feature>
<feature type="binding site" evidence="1">
    <location>
        <position position="301"/>
    </location>
    <ligand>
        <name>substrate</name>
    </ligand>
</feature>
<feature type="modified residue" description="N6-(pyridoxal phosphate)lysine" evidence="1">
    <location>
        <position position="33"/>
    </location>
</feature>
<protein>
    <recommendedName>
        <fullName evidence="1">Alanine racemase</fullName>
        <ecNumber evidence="1">5.1.1.1</ecNumber>
    </recommendedName>
</protein>
<comment type="function">
    <text evidence="2">Catalyzes the interconversion of L-alanine and D-alanine. Is highly specific for alanine as substrate. May serve both anabolic and catabolic purposes.</text>
</comment>
<comment type="catalytic activity">
    <reaction evidence="1 2">
        <text>L-alanine = D-alanine</text>
        <dbReference type="Rhea" id="RHEA:20249"/>
        <dbReference type="ChEBI" id="CHEBI:57416"/>
        <dbReference type="ChEBI" id="CHEBI:57972"/>
        <dbReference type="EC" id="5.1.1.1"/>
    </reaction>
</comment>
<comment type="cofactor">
    <cofactor evidence="1">
        <name>pyridoxal 5'-phosphate</name>
        <dbReference type="ChEBI" id="CHEBI:597326"/>
    </cofactor>
</comment>
<comment type="biophysicochemical properties">
    <phDependence>
        <text evidence="2">Optimum pH is 8.0.</text>
    </phDependence>
    <temperatureDependence>
        <text evidence="2">Optimum temperature is 35 degrees Celsius.</text>
    </temperatureDependence>
</comment>
<comment type="pathway">
    <text evidence="1">Amino-acid biosynthesis; D-alanine biosynthesis; D-alanine from L-alanine: step 1/1.</text>
</comment>
<comment type="subunit">
    <text evidence="2">Homodimer.</text>
</comment>
<comment type="similarity">
    <text evidence="1">Belongs to the alanine racemase family.</text>
</comment>
<keyword id="KW-0413">Isomerase</keyword>
<keyword id="KW-0663">Pyridoxal phosphate</keyword>